<gene>
    <name evidence="1" type="primary">ilvC</name>
    <name type="ordered locus">Mboo_0481</name>
</gene>
<keyword id="KW-0028">Amino-acid biosynthesis</keyword>
<keyword id="KW-0100">Branched-chain amino acid biosynthesis</keyword>
<keyword id="KW-0460">Magnesium</keyword>
<keyword id="KW-0479">Metal-binding</keyword>
<keyword id="KW-0521">NADP</keyword>
<keyword id="KW-0560">Oxidoreductase</keyword>
<keyword id="KW-1185">Reference proteome</keyword>
<accession>A7I5I8</accession>
<proteinExistence type="inferred from homology"/>
<organism>
    <name type="scientific">Methanoregula boonei (strain DSM 21154 / JCM 14090 / 6A8)</name>
    <dbReference type="NCBI Taxonomy" id="456442"/>
    <lineage>
        <taxon>Archaea</taxon>
        <taxon>Methanobacteriati</taxon>
        <taxon>Methanobacteriota</taxon>
        <taxon>Stenosarchaea group</taxon>
        <taxon>Methanomicrobia</taxon>
        <taxon>Methanomicrobiales</taxon>
        <taxon>Methanoregulaceae</taxon>
        <taxon>Methanoregula</taxon>
    </lineage>
</organism>
<comment type="function">
    <text evidence="1">Involved in the biosynthesis of branched-chain amino acids (BCAA). Catalyzes an alkyl-migration followed by a ketol-acid reduction of (S)-2-acetolactate (S2AL) to yield (R)-2,3-dihydroxy-isovalerate. In the isomerase reaction, S2AL is rearranged via a Mg-dependent methyl migration to produce 3-hydroxy-3-methyl-2-ketobutyrate (HMKB). In the reductase reaction, this 2-ketoacid undergoes a metal-dependent reduction by NADPH to yield (R)-2,3-dihydroxy-isovalerate.</text>
</comment>
<comment type="catalytic activity">
    <reaction evidence="1">
        <text>(2R)-2,3-dihydroxy-3-methylbutanoate + NADP(+) = (2S)-2-acetolactate + NADPH + H(+)</text>
        <dbReference type="Rhea" id="RHEA:22068"/>
        <dbReference type="ChEBI" id="CHEBI:15378"/>
        <dbReference type="ChEBI" id="CHEBI:49072"/>
        <dbReference type="ChEBI" id="CHEBI:57783"/>
        <dbReference type="ChEBI" id="CHEBI:58349"/>
        <dbReference type="ChEBI" id="CHEBI:58476"/>
        <dbReference type="EC" id="1.1.1.86"/>
    </reaction>
</comment>
<comment type="catalytic activity">
    <reaction evidence="1">
        <text>(2R,3R)-2,3-dihydroxy-3-methylpentanoate + NADP(+) = (S)-2-ethyl-2-hydroxy-3-oxobutanoate + NADPH + H(+)</text>
        <dbReference type="Rhea" id="RHEA:13493"/>
        <dbReference type="ChEBI" id="CHEBI:15378"/>
        <dbReference type="ChEBI" id="CHEBI:49256"/>
        <dbReference type="ChEBI" id="CHEBI:49258"/>
        <dbReference type="ChEBI" id="CHEBI:57783"/>
        <dbReference type="ChEBI" id="CHEBI:58349"/>
        <dbReference type="EC" id="1.1.1.86"/>
    </reaction>
</comment>
<comment type="cofactor">
    <cofactor evidence="1">
        <name>Mg(2+)</name>
        <dbReference type="ChEBI" id="CHEBI:18420"/>
    </cofactor>
    <text evidence="1">Binds 2 magnesium ions per subunit.</text>
</comment>
<comment type="pathway">
    <text evidence="1">Amino-acid biosynthesis; L-isoleucine biosynthesis; L-isoleucine from 2-oxobutanoate: step 2/4.</text>
</comment>
<comment type="pathway">
    <text evidence="1">Amino-acid biosynthesis; L-valine biosynthesis; L-valine from pyruvate: step 2/4.</text>
</comment>
<comment type="similarity">
    <text evidence="1">Belongs to the ketol-acid reductoisomerase family.</text>
</comment>
<name>ILVC_METB6</name>
<dbReference type="EC" id="1.1.1.86" evidence="1"/>
<dbReference type="EMBL" id="CP000780">
    <property type="protein sequence ID" value="ABS54999.1"/>
    <property type="molecule type" value="Genomic_DNA"/>
</dbReference>
<dbReference type="RefSeq" id="WP_012106018.1">
    <property type="nucleotide sequence ID" value="NC_009712.1"/>
</dbReference>
<dbReference type="SMR" id="A7I5I8"/>
<dbReference type="STRING" id="456442.Mboo_0481"/>
<dbReference type="GeneID" id="5410166"/>
<dbReference type="KEGG" id="mbn:Mboo_0481"/>
<dbReference type="eggNOG" id="arCOG04465">
    <property type="taxonomic scope" value="Archaea"/>
</dbReference>
<dbReference type="HOGENOM" id="CLU_033821_0_1_2"/>
<dbReference type="UniPathway" id="UPA00047">
    <property type="reaction ID" value="UER00056"/>
</dbReference>
<dbReference type="UniPathway" id="UPA00049">
    <property type="reaction ID" value="UER00060"/>
</dbReference>
<dbReference type="Proteomes" id="UP000002408">
    <property type="component" value="Chromosome"/>
</dbReference>
<dbReference type="GO" id="GO:0004455">
    <property type="term" value="F:ketol-acid reductoisomerase activity"/>
    <property type="evidence" value="ECO:0007669"/>
    <property type="project" value="UniProtKB-UniRule"/>
</dbReference>
<dbReference type="GO" id="GO:0000287">
    <property type="term" value="F:magnesium ion binding"/>
    <property type="evidence" value="ECO:0007669"/>
    <property type="project" value="UniProtKB-UniRule"/>
</dbReference>
<dbReference type="GO" id="GO:0050661">
    <property type="term" value="F:NADP binding"/>
    <property type="evidence" value="ECO:0007669"/>
    <property type="project" value="InterPro"/>
</dbReference>
<dbReference type="GO" id="GO:0009097">
    <property type="term" value="P:isoleucine biosynthetic process"/>
    <property type="evidence" value="ECO:0007669"/>
    <property type="project" value="UniProtKB-UniRule"/>
</dbReference>
<dbReference type="GO" id="GO:0009099">
    <property type="term" value="P:L-valine biosynthetic process"/>
    <property type="evidence" value="ECO:0007669"/>
    <property type="project" value="UniProtKB-UniRule"/>
</dbReference>
<dbReference type="FunFam" id="3.40.50.720:FF:000023">
    <property type="entry name" value="Ketol-acid reductoisomerase (NADP(+))"/>
    <property type="match status" value="1"/>
</dbReference>
<dbReference type="Gene3D" id="6.10.240.10">
    <property type="match status" value="1"/>
</dbReference>
<dbReference type="Gene3D" id="3.40.50.720">
    <property type="entry name" value="NAD(P)-binding Rossmann-like Domain"/>
    <property type="match status" value="1"/>
</dbReference>
<dbReference type="HAMAP" id="MF_00435">
    <property type="entry name" value="IlvC"/>
    <property type="match status" value="1"/>
</dbReference>
<dbReference type="InterPro" id="IPR008927">
    <property type="entry name" value="6-PGluconate_DH-like_C_sf"/>
</dbReference>
<dbReference type="InterPro" id="IPR013023">
    <property type="entry name" value="KARI"/>
</dbReference>
<dbReference type="InterPro" id="IPR000506">
    <property type="entry name" value="KARI_C"/>
</dbReference>
<dbReference type="InterPro" id="IPR013116">
    <property type="entry name" value="KARI_N"/>
</dbReference>
<dbReference type="InterPro" id="IPR014359">
    <property type="entry name" value="KARI_prok"/>
</dbReference>
<dbReference type="InterPro" id="IPR036291">
    <property type="entry name" value="NAD(P)-bd_dom_sf"/>
</dbReference>
<dbReference type="NCBIfam" id="TIGR00465">
    <property type="entry name" value="ilvC"/>
    <property type="match status" value="1"/>
</dbReference>
<dbReference type="NCBIfam" id="NF004017">
    <property type="entry name" value="PRK05479.1"/>
    <property type="match status" value="1"/>
</dbReference>
<dbReference type="NCBIfam" id="NF009940">
    <property type="entry name" value="PRK13403.1"/>
    <property type="match status" value="1"/>
</dbReference>
<dbReference type="PANTHER" id="PTHR21371">
    <property type="entry name" value="KETOL-ACID REDUCTOISOMERASE, MITOCHONDRIAL"/>
    <property type="match status" value="1"/>
</dbReference>
<dbReference type="PANTHER" id="PTHR21371:SF1">
    <property type="entry name" value="KETOL-ACID REDUCTOISOMERASE, MITOCHONDRIAL"/>
    <property type="match status" value="1"/>
</dbReference>
<dbReference type="Pfam" id="PF01450">
    <property type="entry name" value="KARI_C"/>
    <property type="match status" value="1"/>
</dbReference>
<dbReference type="Pfam" id="PF07991">
    <property type="entry name" value="KARI_N"/>
    <property type="match status" value="1"/>
</dbReference>
<dbReference type="PIRSF" id="PIRSF000116">
    <property type="entry name" value="IlvC_gammaproteo"/>
    <property type="match status" value="1"/>
</dbReference>
<dbReference type="SUPFAM" id="SSF48179">
    <property type="entry name" value="6-phosphogluconate dehydrogenase C-terminal domain-like"/>
    <property type="match status" value="1"/>
</dbReference>
<dbReference type="SUPFAM" id="SSF51735">
    <property type="entry name" value="NAD(P)-binding Rossmann-fold domains"/>
    <property type="match status" value="1"/>
</dbReference>
<dbReference type="PROSITE" id="PS51851">
    <property type="entry name" value="KARI_C"/>
    <property type="match status" value="1"/>
</dbReference>
<dbReference type="PROSITE" id="PS51850">
    <property type="entry name" value="KARI_N"/>
    <property type="match status" value="1"/>
</dbReference>
<sequence length="329" mass="36246">MMKKYYESDADLSVLSGKKIAVIGYGSQGRGQSLNLRDSGLDVIIGLRKGKSWDAAAKDGMNVMTVAEAAKKADIIQILLPDELQAAVYKNEILPHLSENKVLMFSHGFNIHFGQIQPPGNVDVIMVAPKGPGFMVRRQYEEGKGVPALIAIHQDHTCKAHKTALAYAKGIGATRAVVLETTFREETETDLFGEQAVLCGGTASLIKAGFETLVDAGYAPEMAYLEVCHELKLIVDLIYEGGLTNMRQYVSNTAQYGDMTRGPRVIGPEAYEAMEEILAEIQSGEFAKEWMLENMVNRPVFNALTKADEEHLLEETGKEVRAMMPQFRK</sequence>
<protein>
    <recommendedName>
        <fullName evidence="1">Ketol-acid reductoisomerase (NADP(+))</fullName>
        <shortName evidence="1">KARI</shortName>
        <ecNumber evidence="1">1.1.1.86</ecNumber>
    </recommendedName>
    <alternativeName>
        <fullName evidence="1">Acetohydroxy-acid isomeroreductase</fullName>
        <shortName evidence="1">AHIR</shortName>
    </alternativeName>
    <alternativeName>
        <fullName evidence="1">Alpha-keto-beta-hydroxylacyl reductoisomerase</fullName>
    </alternativeName>
    <alternativeName>
        <fullName evidence="1">Ketol-acid reductoisomerase type 1</fullName>
    </alternativeName>
    <alternativeName>
        <fullName evidence="1">Ketol-acid reductoisomerase type I</fullName>
    </alternativeName>
</protein>
<feature type="chain" id="PRO_1000050527" description="Ketol-acid reductoisomerase (NADP(+))">
    <location>
        <begin position="1"/>
        <end position="329"/>
    </location>
</feature>
<feature type="domain" description="KARI N-terminal Rossmann" evidence="2">
    <location>
        <begin position="2"/>
        <end position="181"/>
    </location>
</feature>
<feature type="domain" description="KARI C-terminal knotted" evidence="3">
    <location>
        <begin position="182"/>
        <end position="327"/>
    </location>
</feature>
<feature type="active site" evidence="1">
    <location>
        <position position="107"/>
    </location>
</feature>
<feature type="binding site" evidence="1">
    <location>
        <begin position="25"/>
        <end position="28"/>
    </location>
    <ligand>
        <name>NADP(+)</name>
        <dbReference type="ChEBI" id="CHEBI:58349"/>
    </ligand>
</feature>
<feature type="binding site" evidence="1">
    <location>
        <position position="48"/>
    </location>
    <ligand>
        <name>NADP(+)</name>
        <dbReference type="ChEBI" id="CHEBI:58349"/>
    </ligand>
</feature>
<feature type="binding site" evidence="1">
    <location>
        <position position="52"/>
    </location>
    <ligand>
        <name>NADP(+)</name>
        <dbReference type="ChEBI" id="CHEBI:58349"/>
    </ligand>
</feature>
<feature type="binding site" evidence="1">
    <location>
        <begin position="82"/>
        <end position="85"/>
    </location>
    <ligand>
        <name>NADP(+)</name>
        <dbReference type="ChEBI" id="CHEBI:58349"/>
    </ligand>
</feature>
<feature type="binding site" evidence="1">
    <location>
        <position position="133"/>
    </location>
    <ligand>
        <name>NADP(+)</name>
        <dbReference type="ChEBI" id="CHEBI:58349"/>
    </ligand>
</feature>
<feature type="binding site" evidence="1">
    <location>
        <position position="190"/>
    </location>
    <ligand>
        <name>Mg(2+)</name>
        <dbReference type="ChEBI" id="CHEBI:18420"/>
        <label>1</label>
    </ligand>
</feature>
<feature type="binding site" evidence="1">
    <location>
        <position position="190"/>
    </location>
    <ligand>
        <name>Mg(2+)</name>
        <dbReference type="ChEBI" id="CHEBI:18420"/>
        <label>2</label>
    </ligand>
</feature>
<feature type="binding site" evidence="1">
    <location>
        <position position="194"/>
    </location>
    <ligand>
        <name>Mg(2+)</name>
        <dbReference type="ChEBI" id="CHEBI:18420"/>
        <label>1</label>
    </ligand>
</feature>
<feature type="binding site" evidence="1">
    <location>
        <position position="226"/>
    </location>
    <ligand>
        <name>Mg(2+)</name>
        <dbReference type="ChEBI" id="CHEBI:18420"/>
        <label>2</label>
    </ligand>
</feature>
<feature type="binding site" evidence="1">
    <location>
        <position position="230"/>
    </location>
    <ligand>
        <name>Mg(2+)</name>
        <dbReference type="ChEBI" id="CHEBI:18420"/>
        <label>2</label>
    </ligand>
</feature>
<feature type="binding site" evidence="1">
    <location>
        <position position="251"/>
    </location>
    <ligand>
        <name>substrate</name>
    </ligand>
</feature>
<evidence type="ECO:0000255" key="1">
    <source>
        <dbReference type="HAMAP-Rule" id="MF_00435"/>
    </source>
</evidence>
<evidence type="ECO:0000255" key="2">
    <source>
        <dbReference type="PROSITE-ProRule" id="PRU01197"/>
    </source>
</evidence>
<evidence type="ECO:0000255" key="3">
    <source>
        <dbReference type="PROSITE-ProRule" id="PRU01198"/>
    </source>
</evidence>
<reference key="1">
    <citation type="journal article" date="2015" name="Microbiology">
        <title>Genome of Methanoregula boonei 6A8 reveals adaptations to oligotrophic peatland environments.</title>
        <authorList>
            <person name="Braeuer S."/>
            <person name="Cadillo-Quiroz H."/>
            <person name="Kyrpides N."/>
            <person name="Woyke T."/>
            <person name="Goodwin L."/>
            <person name="Detter C."/>
            <person name="Podell S."/>
            <person name="Yavitt J.B."/>
            <person name="Zinder S.H."/>
        </authorList>
    </citation>
    <scope>NUCLEOTIDE SEQUENCE [LARGE SCALE GENOMIC DNA]</scope>
    <source>
        <strain>DSM 21154 / JCM 14090 / 6A8</strain>
    </source>
</reference>